<keyword id="KW-0217">Developmental protein</keyword>
<keyword id="KW-0221">Differentiation</keyword>
<keyword id="KW-0325">Glycoprotein</keyword>
<keyword id="KW-0379">Hydroxylation</keyword>
<keyword id="KW-1185">Reference proteome</keyword>
<keyword id="KW-0964">Secreted</keyword>
<keyword id="KW-0732">Signal</keyword>
<reference key="1">
    <citation type="journal article" date="2000" name="Nature">
        <title>Sequence and analysis of chromosome 1 of the plant Arabidopsis thaliana.</title>
        <authorList>
            <person name="Theologis A."/>
            <person name="Ecker J.R."/>
            <person name="Palm C.J."/>
            <person name="Federspiel N.A."/>
            <person name="Kaul S."/>
            <person name="White O."/>
            <person name="Alonso J."/>
            <person name="Altafi H."/>
            <person name="Araujo R."/>
            <person name="Bowman C.L."/>
            <person name="Brooks S.Y."/>
            <person name="Buehler E."/>
            <person name="Chan A."/>
            <person name="Chao Q."/>
            <person name="Chen H."/>
            <person name="Cheuk R.F."/>
            <person name="Chin C.W."/>
            <person name="Chung M.K."/>
            <person name="Conn L."/>
            <person name="Conway A.B."/>
            <person name="Conway A.R."/>
            <person name="Creasy T.H."/>
            <person name="Dewar K."/>
            <person name="Dunn P."/>
            <person name="Etgu P."/>
            <person name="Feldblyum T.V."/>
            <person name="Feng J.-D."/>
            <person name="Fong B."/>
            <person name="Fujii C.Y."/>
            <person name="Gill J.E."/>
            <person name="Goldsmith A.D."/>
            <person name="Haas B."/>
            <person name="Hansen N.F."/>
            <person name="Hughes B."/>
            <person name="Huizar L."/>
            <person name="Hunter J.L."/>
            <person name="Jenkins J."/>
            <person name="Johnson-Hopson C."/>
            <person name="Khan S."/>
            <person name="Khaykin E."/>
            <person name="Kim C.J."/>
            <person name="Koo H.L."/>
            <person name="Kremenetskaia I."/>
            <person name="Kurtz D.B."/>
            <person name="Kwan A."/>
            <person name="Lam B."/>
            <person name="Langin-Hooper S."/>
            <person name="Lee A."/>
            <person name="Lee J.M."/>
            <person name="Lenz C.A."/>
            <person name="Li J.H."/>
            <person name="Li Y.-P."/>
            <person name="Lin X."/>
            <person name="Liu S.X."/>
            <person name="Liu Z.A."/>
            <person name="Luros J.S."/>
            <person name="Maiti R."/>
            <person name="Marziali A."/>
            <person name="Militscher J."/>
            <person name="Miranda M."/>
            <person name="Nguyen M."/>
            <person name="Nierman W.C."/>
            <person name="Osborne B.I."/>
            <person name="Pai G."/>
            <person name="Peterson J."/>
            <person name="Pham P.K."/>
            <person name="Rizzo M."/>
            <person name="Rooney T."/>
            <person name="Rowley D."/>
            <person name="Sakano H."/>
            <person name="Salzberg S.L."/>
            <person name="Schwartz J.R."/>
            <person name="Shinn P."/>
            <person name="Southwick A.M."/>
            <person name="Sun H."/>
            <person name="Tallon L.J."/>
            <person name="Tambunga G."/>
            <person name="Toriumi M.J."/>
            <person name="Town C.D."/>
            <person name="Utterback T."/>
            <person name="Van Aken S."/>
            <person name="Vaysberg M."/>
            <person name="Vysotskaia V.S."/>
            <person name="Walker M."/>
            <person name="Wu D."/>
            <person name="Yu G."/>
            <person name="Fraser C.M."/>
            <person name="Venter J.C."/>
            <person name="Davis R.W."/>
        </authorList>
    </citation>
    <scope>NUCLEOTIDE SEQUENCE [LARGE SCALE GENOMIC DNA]</scope>
    <source>
        <strain>cv. Columbia</strain>
    </source>
</reference>
<reference key="2">
    <citation type="journal article" date="2017" name="Plant J.">
        <title>Araport11: a complete reannotation of the Arabidopsis thaliana reference genome.</title>
        <authorList>
            <person name="Cheng C.Y."/>
            <person name="Krishnakumar V."/>
            <person name="Chan A.P."/>
            <person name="Thibaud-Nissen F."/>
            <person name="Schobel S."/>
            <person name="Town C.D."/>
        </authorList>
    </citation>
    <scope>GENOME REANNOTATION</scope>
    <source>
        <strain>cv. Columbia</strain>
    </source>
</reference>
<reference key="3">
    <citation type="journal article" date="2006" name="Plant Biotechnol. J.">
        <title>Simultaneous high-throughput recombinational cloning of open reading frames in closed and open configurations.</title>
        <authorList>
            <person name="Underwood B.A."/>
            <person name="Vanderhaeghen R."/>
            <person name="Whitford R."/>
            <person name="Town C.D."/>
            <person name="Hilson P."/>
        </authorList>
    </citation>
    <scope>NUCLEOTIDE SEQUENCE [LARGE SCALE MRNA] OF 23-86</scope>
    <source>
        <strain>cv. Columbia</strain>
    </source>
</reference>
<reference key="4">
    <citation type="journal article" date="2001" name="Plant Physiol.">
        <title>A large family of genes that share homology with CLAVATA3.</title>
        <authorList>
            <person name="Cock J.M."/>
            <person name="McCormick S."/>
        </authorList>
    </citation>
    <scope>GENE FAMILY</scope>
    <scope>NOMENCLATURE</scope>
</reference>
<reference key="5">
    <citation type="journal article" date="2003" name="Plant Mol. Biol.">
        <title>The Arabidopsis CLV3-like (CLE) genes are expressed in diverse tissues and encode secreted proteins.</title>
        <authorList>
            <person name="Sharma V.K."/>
            <person name="Ramirez J."/>
            <person name="Fletcher J.C."/>
        </authorList>
    </citation>
    <scope>TISSUE SPECIFICITY</scope>
</reference>
<reference key="6">
    <citation type="journal article" date="2006" name="Plant Physiol.">
        <title>Evidence for functional conservation, sufficiency, and proteolytic processing of the CLAVATA3 CLE domain.</title>
        <authorList>
            <person name="Ni J."/>
            <person name="Clark S.E."/>
        </authorList>
    </citation>
    <scope>FUNCTION</scope>
</reference>
<reference key="7">
    <citation type="journal article" date="2006" name="Plant Physiol.">
        <title>Gain-of-function phenotypes of many CLAVATA3/ESR genes, including four new family members, correlate with tandem variations in the conserved CLAVATA3/ESR domain.</title>
        <authorList>
            <person name="Strabala T.J."/>
            <person name="O'donnell P.J."/>
            <person name="Smit A.-M."/>
            <person name="Ampomah-Dwamena C."/>
            <person name="Martin E.J."/>
            <person name="Netzler N."/>
            <person name="Nieuwenhuizen N.J."/>
            <person name="Quinn B.D."/>
            <person name="Foote H.C.C."/>
            <person name="Hudson K.R."/>
        </authorList>
    </citation>
    <scope>GENE FAMILY</scope>
</reference>
<reference key="8">
    <citation type="journal article" date="2006" name="Science">
        <title>Dodeca-CLE peptides as suppressors of plant stem cell differentiation.</title>
        <authorList>
            <person name="Ito Y."/>
            <person name="Nakanomyo I."/>
            <person name="Motose H."/>
            <person name="Iwamoto K."/>
            <person name="Sawa S."/>
            <person name="Dohmae N."/>
            <person name="Fukuda H."/>
        </authorList>
    </citation>
    <scope>FUNCTION</scope>
</reference>
<reference key="9">
    <citation type="journal article" date="2008" name="Cell. Mol. Life Sci.">
        <title>The CLE family of plant polypeptide signaling molecules.</title>
        <authorList>
            <person name="Jun J.H."/>
            <person name="Fiume E."/>
            <person name="Fletcher J.C."/>
        </authorList>
    </citation>
    <scope>REVIEW</scope>
</reference>
<reference key="10">
    <citation type="journal article" date="2008" name="Curr. Opin. Plant Biol.">
        <title>Diverse and conserved roles of CLE peptides.</title>
        <authorList>
            <person name="Mitchum M.G."/>
            <person name="Wang X."/>
            <person name="Davis E.L."/>
        </authorList>
    </citation>
    <scope>REVIEW</scope>
</reference>
<reference key="11">
    <citation type="journal article" date="2010" name="Protoplasma">
        <title>CLE peptide signaling during plant development.</title>
        <authorList>
            <person name="Wang G."/>
            <person name="Fiers M."/>
        </authorList>
    </citation>
    <scope>REVIEW</scope>
</reference>
<reference key="12">
    <citation type="journal article" date="2012" name="Plant Cell">
        <title>Regulation of Arabidopsis embryo and endosperm development by the polypeptide signaling molecule CLE8.</title>
        <authorList>
            <person name="Fiume E."/>
            <person name="Fletcher J.C."/>
        </authorList>
    </citation>
    <scope>FUNCTION</scope>
    <scope>TISSUE SPECIFICITY</scope>
    <scope>MUTAGENESIS OF PRO-67</scope>
</reference>
<reference key="13">
    <citation type="journal article" date="2017" name="EMBO Rep.">
        <title>Perception of root-active CLE peptides requires CORYNE function in the phloem vasculature.</title>
        <authorList>
            <person name="Hazak O."/>
            <person name="Brandt B."/>
            <person name="Cattaneo P."/>
            <person name="Santiago J."/>
            <person name="Rodriguez-Villalon A."/>
            <person name="Hothorn M."/>
            <person name="Hardtke C.S."/>
        </authorList>
    </citation>
    <scope>FUNCTION</scope>
    <source>
        <strain>cv. Columbia</strain>
    </source>
</reference>
<accession>Q2V4E2</accession>
<accession>A0MDK3</accession>
<accession>Q1G3X6</accession>
<evidence type="ECO:0000250" key="1">
    <source>
        <dbReference type="UniProtKB" id="A1EC31"/>
    </source>
</evidence>
<evidence type="ECO:0000250" key="2">
    <source>
        <dbReference type="UniProtKB" id="O49519"/>
    </source>
</evidence>
<evidence type="ECO:0000255" key="3"/>
<evidence type="ECO:0000256" key="4">
    <source>
        <dbReference type="SAM" id="MobiDB-lite"/>
    </source>
</evidence>
<evidence type="ECO:0000269" key="5">
    <source>
    </source>
</evidence>
<evidence type="ECO:0000269" key="6">
    <source>
    </source>
</evidence>
<evidence type="ECO:0000269" key="7">
    <source>
    </source>
</evidence>
<evidence type="ECO:0000269" key="8">
    <source>
    </source>
</evidence>
<evidence type="ECO:0000269" key="9">
    <source>
    </source>
</evidence>
<evidence type="ECO:0000303" key="10">
    <source>
    </source>
</evidence>
<evidence type="ECO:0000305" key="11"/>
<evidence type="ECO:0000312" key="12">
    <source>
        <dbReference type="Araport" id="AT1G67775"/>
    </source>
</evidence>
<protein>
    <recommendedName>
        <fullName evidence="10">CLAVATA3/ESR (CLE)-related protein 8</fullName>
    </recommendedName>
    <component>
        <recommendedName>
            <fullName evidence="10">CLE8p</fullName>
        </recommendedName>
    </component>
</protein>
<name>CLE8_ARATH</name>
<feature type="signal peptide" evidence="3">
    <location>
        <begin position="1"/>
        <end position="24"/>
    </location>
</feature>
<feature type="chain" id="PRO_0000401247" description="CLAVATA3/ESR (CLE)-related protein 8">
    <location>
        <begin position="25"/>
        <end position="86"/>
    </location>
</feature>
<feature type="peptide" id="PRO_0000401248" description="CLE8p" evidence="2">
    <location>
        <begin position="61"/>
        <end position="72"/>
    </location>
</feature>
<feature type="region of interest" description="Disordered" evidence="4">
    <location>
        <begin position="43"/>
        <end position="86"/>
    </location>
</feature>
<feature type="modified residue" description="Hydroxyproline" evidence="1">
    <location>
        <position position="64"/>
    </location>
</feature>
<feature type="modified residue" description="Hydroxyproline" evidence="1">
    <location>
        <position position="67"/>
    </location>
</feature>
<feature type="glycosylation site" description="O-linked (Ara...) hydroxyproline" evidence="2">
    <location>
        <position position="67"/>
    </location>
</feature>
<feature type="mutagenesis site" description="In cle8-1; defective embryo development." evidence="8">
    <original>P</original>
    <variation>L</variation>
    <location>
        <position position="67"/>
    </location>
</feature>
<dbReference type="EMBL" id="AC008113">
    <property type="status" value="NOT_ANNOTATED_CDS"/>
    <property type="molecule type" value="Genomic_DNA"/>
</dbReference>
<dbReference type="EMBL" id="CP002684">
    <property type="protein sequence ID" value="AEE34693.1"/>
    <property type="molecule type" value="Genomic_DNA"/>
</dbReference>
<dbReference type="EMBL" id="DQ487458">
    <property type="protein sequence ID" value="ABF59187.1"/>
    <property type="molecule type" value="mRNA"/>
</dbReference>
<dbReference type="EMBL" id="DQ652619">
    <property type="protein sequence ID" value="ABK28316.1"/>
    <property type="status" value="ALT_SEQ"/>
    <property type="molecule type" value="mRNA"/>
</dbReference>
<dbReference type="RefSeq" id="NP_001031249.1">
    <property type="nucleotide sequence ID" value="NM_001036172.2"/>
</dbReference>
<dbReference type="STRING" id="3702.Q2V4E2"/>
<dbReference type="GlyCosmos" id="Q2V4E2">
    <property type="glycosylation" value="1 site, No reported glycans"/>
</dbReference>
<dbReference type="PaxDb" id="3702-AT1G67775.1"/>
<dbReference type="EnsemblPlants" id="AT1G67775.1">
    <property type="protein sequence ID" value="AT1G67775.1"/>
    <property type="gene ID" value="AT1G67775"/>
</dbReference>
<dbReference type="GeneID" id="3767662"/>
<dbReference type="Gramene" id="AT1G67775.1">
    <property type="protein sequence ID" value="AT1G67775.1"/>
    <property type="gene ID" value="AT1G67775"/>
</dbReference>
<dbReference type="KEGG" id="ath:AT1G67775"/>
<dbReference type="Araport" id="AT1G67775"/>
<dbReference type="TAIR" id="AT1G67775">
    <property type="gene designation" value="CLE8"/>
</dbReference>
<dbReference type="HOGENOM" id="CLU_192459_0_0_1"/>
<dbReference type="InParanoid" id="Q2V4E2"/>
<dbReference type="OMA" id="FRIMRTV"/>
<dbReference type="OrthoDB" id="1093393at2759"/>
<dbReference type="PhylomeDB" id="Q2V4E2"/>
<dbReference type="PRO" id="PR:Q2V4E2"/>
<dbReference type="Proteomes" id="UP000006548">
    <property type="component" value="Chromosome 1"/>
</dbReference>
<dbReference type="ExpressionAtlas" id="Q2V4E2">
    <property type="expression patterns" value="baseline"/>
</dbReference>
<dbReference type="GO" id="GO:0048046">
    <property type="term" value="C:apoplast"/>
    <property type="evidence" value="ECO:0000250"/>
    <property type="project" value="UniProtKB"/>
</dbReference>
<dbReference type="GO" id="GO:0033612">
    <property type="term" value="F:receptor serine/threonine kinase binding"/>
    <property type="evidence" value="ECO:0000250"/>
    <property type="project" value="UniProtKB"/>
</dbReference>
<dbReference type="GO" id="GO:0045168">
    <property type="term" value="P:cell-cell signaling involved in cell fate commitment"/>
    <property type="evidence" value="ECO:0000250"/>
    <property type="project" value="UniProtKB"/>
</dbReference>
<dbReference type="GO" id="GO:0009793">
    <property type="term" value="P:embryo development ending in seed dormancy"/>
    <property type="evidence" value="ECO:0000315"/>
    <property type="project" value="TAIR"/>
</dbReference>
<dbReference type="GO" id="GO:0010078">
    <property type="term" value="P:maintenance of root meristem identity"/>
    <property type="evidence" value="ECO:0000314"/>
    <property type="project" value="UniProtKB"/>
</dbReference>
<dbReference type="GO" id="GO:0010088">
    <property type="term" value="P:phloem development"/>
    <property type="evidence" value="ECO:0000314"/>
    <property type="project" value="UniProtKB"/>
</dbReference>
<dbReference type="GO" id="GO:0010628">
    <property type="term" value="P:positive regulation of gene expression"/>
    <property type="evidence" value="ECO:0000315"/>
    <property type="project" value="TAIR"/>
</dbReference>
<dbReference type="GO" id="GO:0045595">
    <property type="term" value="P:regulation of cell differentiation"/>
    <property type="evidence" value="ECO:0000314"/>
    <property type="project" value="UniProtKB"/>
</dbReference>
<dbReference type="GO" id="GO:2000014">
    <property type="term" value="P:regulation of endosperm development"/>
    <property type="evidence" value="ECO:0000315"/>
    <property type="project" value="TAIR"/>
</dbReference>
<dbReference type="GO" id="GO:0080113">
    <property type="term" value="P:regulation of seed growth"/>
    <property type="evidence" value="ECO:0000315"/>
    <property type="project" value="TAIR"/>
</dbReference>
<organism>
    <name type="scientific">Arabidopsis thaliana</name>
    <name type="common">Mouse-ear cress</name>
    <dbReference type="NCBI Taxonomy" id="3702"/>
    <lineage>
        <taxon>Eukaryota</taxon>
        <taxon>Viridiplantae</taxon>
        <taxon>Streptophyta</taxon>
        <taxon>Embryophyta</taxon>
        <taxon>Tracheophyta</taxon>
        <taxon>Spermatophyta</taxon>
        <taxon>Magnoliopsida</taxon>
        <taxon>eudicotyledons</taxon>
        <taxon>Gunneridae</taxon>
        <taxon>Pentapetalae</taxon>
        <taxon>rosids</taxon>
        <taxon>malvids</taxon>
        <taxon>Brassicales</taxon>
        <taxon>Brassicaceae</taxon>
        <taxon>Camelineae</taxon>
        <taxon>Arabidopsis</taxon>
    </lineage>
</organism>
<proteinExistence type="evidence at protein level"/>
<sequence>MKVLKRDSMLLLITLYFLLTTSMARQDPFLVGVEKDVVPAGTDLKQNKAKPHLPNLFRTMRRVPTGPNPLHHISPPQPGSLNYARN</sequence>
<gene>
    <name evidence="10" type="primary">CLE8</name>
    <name evidence="12" type="ordered locus">At1g67775</name>
    <name evidence="11" type="ORF">F12A21</name>
</gene>
<comment type="function">
    <molecule>CLE8p</molecule>
    <text evidence="6 7 8 9">Extracellular signal peptide that regulates cell fate (PubMed:16407446). Represses root apical meristem maintenance (PubMed:16902140). Positively regulates the expression of the transcription factor WOX8 and thus, regulates early embryo development (PubMed:22427333). Regulates the transition of protophloem cells from proliferation to differentiation, thus impinging on postembryonic growth capacity of the root meristem; this signaling pathway requires CRN and CLV2 (PubMed:28607033).</text>
</comment>
<comment type="subcellular location">
    <molecule>CLE8p</molecule>
    <subcellularLocation>
        <location evidence="2">Secreted</location>
        <location evidence="2">Extracellular space</location>
    </subcellularLocation>
</comment>
<comment type="tissue specificity">
    <molecule>CLE8p</molecule>
    <text evidence="5 8">Mostly expressed in siliques, and, to a lower extent, in flowers (PubMed:12602871). Expressed in young embryos and endosperm (PubMed:22427333).</text>
</comment>
<comment type="PTM">
    <molecule>CLE8p</molecule>
    <text evidence="2">The O-glycosylation (arabinosylation) of the hydroxyproline Pro-67 enhances binding affinity of the CLE8p peptide for its receptor.</text>
</comment>
<comment type="similarity">
    <text evidence="11">Belongs to the CLV3/ESR signal peptide family.</text>
</comment>
<comment type="sequence caution" evidence="11">
    <conflict type="erroneous termination">
        <sequence resource="EMBL-CDS" id="ABK28316"/>
    </conflict>
    <text>Extended C-terminus.</text>
</comment>